<name>MATK_CYPCL</name>
<organism>
    <name type="scientific">Cypripedium calceolus</name>
    <name type="common">Yellow lady's slipper</name>
    <name type="synonym">Lady's slipper orchid</name>
    <dbReference type="NCBI Taxonomy" id="53038"/>
    <lineage>
        <taxon>Eukaryota</taxon>
        <taxon>Viridiplantae</taxon>
        <taxon>Streptophyta</taxon>
        <taxon>Embryophyta</taxon>
        <taxon>Tracheophyta</taxon>
        <taxon>Spermatophyta</taxon>
        <taxon>Magnoliopsida</taxon>
        <taxon>Liliopsida</taxon>
        <taxon>Asparagales</taxon>
        <taxon>Orchidaceae</taxon>
        <taxon>Cypripedioideae</taxon>
        <taxon>Cypripedium</taxon>
    </lineage>
</organism>
<gene>
    <name evidence="1" type="primary">matK</name>
</gene>
<reference key="1">
    <citation type="journal article" date="2004" name="Plant Syst. Evol.">
        <title>A phylogenetic analysis of Apostasioideae (Orchidaceae) based on ITS, trnL-F and matK.</title>
        <authorList>
            <person name="Kocyan A."/>
            <person name="Qiu Y.-L."/>
            <person name="Endress P.K."/>
            <person name="Conti E."/>
        </authorList>
    </citation>
    <scope>NUCLEOTIDE SEQUENCE [GENOMIC DNA]</scope>
</reference>
<sequence length="516" mass="61706">MYVNGRILRILKFKKDGFRQQNFLYPLLLQEYIYSLAHDHNFNSFFFYKPVEIFGYDNKSSLVLVKRLITRMYQQNSLISSVNYSNQKGFWGHKNFFFSNFYSQMVSEGFGVILEIPFSSQLVSSLEEKKIPKSQNLRSIHSIFPFLEDKFLHLNYVSDLLIPHPIHLEILVQILQCWIKDVPSLHLLRLLFHEYHYFNSLITSKKSIYAFSRIKKRFLWFLYNSYVYECEYLFHFLRKQSSYLRSTSSGVFLERTHFYVKIEHLIVVCCNSFHRILCFLKDPFMHYVRYQGKAILASKGTLILMKKWKFHLVNFWQSYLHFWSQPYRIHIKQLYNYSFSFLGYFSSVLENHLVVRNQMLENSFLINIMTKKLDTIAPVISLIGSLSKAQFCTVLGHPISKPIWTDLSDSDILDRFCRICRNLCRYHSGSSKKKVLYRIKYILRFSCARTLARKHKSTVRTFMRRLGSGLLEEFFMEEEVLSLIFLQKIPFPLHGSHRDRIWYLDIIHINDLVDHS</sequence>
<evidence type="ECO:0000255" key="1">
    <source>
        <dbReference type="HAMAP-Rule" id="MF_01390"/>
    </source>
</evidence>
<feature type="chain" id="PRO_0000143352" description="Maturase K">
    <location>
        <begin position="1"/>
        <end position="516"/>
    </location>
</feature>
<geneLocation type="chloroplast"/>
<keyword id="KW-0150">Chloroplast</keyword>
<keyword id="KW-0507">mRNA processing</keyword>
<keyword id="KW-0934">Plastid</keyword>
<keyword id="KW-0694">RNA-binding</keyword>
<keyword id="KW-0819">tRNA processing</keyword>
<dbReference type="EMBL" id="AY557208">
    <property type="protein sequence ID" value="AAT45849.1"/>
    <property type="molecule type" value="Genomic_DNA"/>
</dbReference>
<dbReference type="GO" id="GO:0009507">
    <property type="term" value="C:chloroplast"/>
    <property type="evidence" value="ECO:0007669"/>
    <property type="project" value="UniProtKB-SubCell"/>
</dbReference>
<dbReference type="GO" id="GO:0003723">
    <property type="term" value="F:RNA binding"/>
    <property type="evidence" value="ECO:0007669"/>
    <property type="project" value="UniProtKB-KW"/>
</dbReference>
<dbReference type="GO" id="GO:0006397">
    <property type="term" value="P:mRNA processing"/>
    <property type="evidence" value="ECO:0007669"/>
    <property type="project" value="UniProtKB-KW"/>
</dbReference>
<dbReference type="GO" id="GO:0008380">
    <property type="term" value="P:RNA splicing"/>
    <property type="evidence" value="ECO:0007669"/>
    <property type="project" value="UniProtKB-UniRule"/>
</dbReference>
<dbReference type="GO" id="GO:0008033">
    <property type="term" value="P:tRNA processing"/>
    <property type="evidence" value="ECO:0007669"/>
    <property type="project" value="UniProtKB-KW"/>
</dbReference>
<dbReference type="HAMAP" id="MF_01390">
    <property type="entry name" value="MatK"/>
    <property type="match status" value="1"/>
</dbReference>
<dbReference type="InterPro" id="IPR024937">
    <property type="entry name" value="Domain_X"/>
</dbReference>
<dbReference type="InterPro" id="IPR002866">
    <property type="entry name" value="Maturase_MatK"/>
</dbReference>
<dbReference type="InterPro" id="IPR024942">
    <property type="entry name" value="Maturase_MatK_N"/>
</dbReference>
<dbReference type="PANTHER" id="PTHR34811">
    <property type="entry name" value="MATURASE K"/>
    <property type="match status" value="1"/>
</dbReference>
<dbReference type="PANTHER" id="PTHR34811:SF1">
    <property type="entry name" value="MATURASE K"/>
    <property type="match status" value="1"/>
</dbReference>
<dbReference type="Pfam" id="PF01348">
    <property type="entry name" value="Intron_maturas2"/>
    <property type="match status" value="1"/>
</dbReference>
<dbReference type="Pfam" id="PF01824">
    <property type="entry name" value="MatK_N"/>
    <property type="match status" value="1"/>
</dbReference>
<comment type="function">
    <text evidence="1">Usually encoded in the trnK tRNA gene intron. Probably assists in splicing its own and other chloroplast group II introns.</text>
</comment>
<comment type="subcellular location">
    <subcellularLocation>
        <location>Plastid</location>
        <location>Chloroplast</location>
    </subcellularLocation>
</comment>
<comment type="similarity">
    <text evidence="1">Belongs to the intron maturase 2 family. MatK subfamily.</text>
</comment>
<protein>
    <recommendedName>
        <fullName evidence="1">Maturase K</fullName>
    </recommendedName>
    <alternativeName>
        <fullName evidence="1">Intron maturase</fullName>
    </alternativeName>
</protein>
<accession>Q6J9Z4</accession>
<proteinExistence type="inferred from homology"/>